<proteinExistence type="inferred from homology"/>
<dbReference type="EMBL" id="AM777385">
    <property type="protein sequence ID" value="CAO86008.1"/>
    <property type="molecule type" value="Genomic_DNA"/>
</dbReference>
<dbReference type="RefSeq" id="YP_001531314.1">
    <property type="nucleotide sequence ID" value="NC_009950.1"/>
</dbReference>
<dbReference type="SMR" id="A8Y9B9"/>
<dbReference type="GeneID" id="5696530"/>
<dbReference type="KEGG" id="lper:5696530"/>
<dbReference type="GO" id="GO:0009507">
    <property type="term" value="C:chloroplast"/>
    <property type="evidence" value="ECO:0007669"/>
    <property type="project" value="UniProtKB-SubCell"/>
</dbReference>
<dbReference type="GO" id="GO:1990904">
    <property type="term" value="C:ribonucleoprotein complex"/>
    <property type="evidence" value="ECO:0007669"/>
    <property type="project" value="UniProtKB-KW"/>
</dbReference>
<dbReference type="GO" id="GO:0005840">
    <property type="term" value="C:ribosome"/>
    <property type="evidence" value="ECO:0007669"/>
    <property type="project" value="UniProtKB-KW"/>
</dbReference>
<dbReference type="GO" id="GO:0019843">
    <property type="term" value="F:rRNA binding"/>
    <property type="evidence" value="ECO:0007669"/>
    <property type="project" value="UniProtKB-UniRule"/>
</dbReference>
<dbReference type="GO" id="GO:0003735">
    <property type="term" value="F:structural constituent of ribosome"/>
    <property type="evidence" value="ECO:0007669"/>
    <property type="project" value="InterPro"/>
</dbReference>
<dbReference type="GO" id="GO:0006412">
    <property type="term" value="P:translation"/>
    <property type="evidence" value="ECO:0007669"/>
    <property type="project" value="UniProtKB-UniRule"/>
</dbReference>
<dbReference type="FunFam" id="3.30.420.80:FF:000003">
    <property type="entry name" value="30S ribosomal protein S11, chloroplastic"/>
    <property type="match status" value="1"/>
</dbReference>
<dbReference type="Gene3D" id="3.30.420.80">
    <property type="entry name" value="Ribosomal protein S11"/>
    <property type="match status" value="1"/>
</dbReference>
<dbReference type="HAMAP" id="MF_01310">
    <property type="entry name" value="Ribosomal_uS11"/>
    <property type="match status" value="1"/>
</dbReference>
<dbReference type="InterPro" id="IPR001971">
    <property type="entry name" value="Ribosomal_uS11"/>
</dbReference>
<dbReference type="InterPro" id="IPR018102">
    <property type="entry name" value="Ribosomal_uS11_CS"/>
</dbReference>
<dbReference type="InterPro" id="IPR036967">
    <property type="entry name" value="Ribosomal_uS11_sf"/>
</dbReference>
<dbReference type="NCBIfam" id="NF003698">
    <property type="entry name" value="PRK05309.1"/>
    <property type="match status" value="1"/>
</dbReference>
<dbReference type="PANTHER" id="PTHR11759">
    <property type="entry name" value="40S RIBOSOMAL PROTEIN S14/30S RIBOSOMAL PROTEIN S11"/>
    <property type="match status" value="1"/>
</dbReference>
<dbReference type="Pfam" id="PF00411">
    <property type="entry name" value="Ribosomal_S11"/>
    <property type="match status" value="1"/>
</dbReference>
<dbReference type="PIRSF" id="PIRSF002131">
    <property type="entry name" value="Ribosomal_S11"/>
    <property type="match status" value="1"/>
</dbReference>
<dbReference type="SUPFAM" id="SSF53137">
    <property type="entry name" value="Translational machinery components"/>
    <property type="match status" value="1"/>
</dbReference>
<dbReference type="PROSITE" id="PS00054">
    <property type="entry name" value="RIBOSOMAL_S11"/>
    <property type="match status" value="1"/>
</dbReference>
<accession>A8Y9B9</accession>
<protein>
    <recommendedName>
        <fullName evidence="1">Small ribosomal subunit protein uS11c</fullName>
    </recommendedName>
    <alternativeName>
        <fullName evidence="2">30S ribosomal protein S11, chloroplastic</fullName>
    </alternativeName>
</protein>
<evidence type="ECO:0000255" key="1">
    <source>
        <dbReference type="HAMAP-Rule" id="MF_01310"/>
    </source>
</evidence>
<evidence type="ECO:0000305" key="2"/>
<name>RR11_LOLPR</name>
<geneLocation type="chloroplast"/>
<comment type="subunit">
    <text evidence="1">Part of the 30S ribosomal subunit.</text>
</comment>
<comment type="subcellular location">
    <subcellularLocation>
        <location>Plastid</location>
        <location>Chloroplast</location>
    </subcellularLocation>
</comment>
<comment type="similarity">
    <text evidence="1">Belongs to the universal ribosomal protein uS11 family.</text>
</comment>
<sequence>MAKAIPKIGSRKKVRIGLRRNARFSLRKSARRITKGVIHVQASFNNTIITVTDPQGRVVFWSSAGTCGFKSSRKASPYAGQRTAVDAIRTVGLQRAEVMVKGAGSGRDAALRAIAKSGVRLSCIRDVTPMPHNGCRPPKKRRL</sequence>
<gene>
    <name evidence="1" type="primary">rps11</name>
    <name type="ordered locus">LopeCp074</name>
</gene>
<feature type="chain" id="PRO_0000323369" description="Small ribosomal subunit protein uS11c">
    <location>
        <begin position="1"/>
        <end position="143"/>
    </location>
</feature>
<keyword id="KW-0150">Chloroplast</keyword>
<keyword id="KW-0934">Plastid</keyword>
<keyword id="KW-0687">Ribonucleoprotein</keyword>
<keyword id="KW-0689">Ribosomal protein</keyword>
<keyword id="KW-0694">RNA-binding</keyword>
<keyword id="KW-0699">rRNA-binding</keyword>
<organism>
    <name type="scientific">Lolium perenne</name>
    <name type="common">Perennial ryegrass</name>
    <dbReference type="NCBI Taxonomy" id="4522"/>
    <lineage>
        <taxon>Eukaryota</taxon>
        <taxon>Viridiplantae</taxon>
        <taxon>Streptophyta</taxon>
        <taxon>Embryophyta</taxon>
        <taxon>Tracheophyta</taxon>
        <taxon>Spermatophyta</taxon>
        <taxon>Magnoliopsida</taxon>
        <taxon>Liliopsida</taxon>
        <taxon>Poales</taxon>
        <taxon>Poaceae</taxon>
        <taxon>BOP clade</taxon>
        <taxon>Pooideae</taxon>
        <taxon>Poodae</taxon>
        <taxon>Poeae</taxon>
        <taxon>Poeae Chloroplast Group 2 (Poeae type)</taxon>
        <taxon>Loliodinae</taxon>
        <taxon>Loliinae</taxon>
        <taxon>Lolium</taxon>
    </lineage>
</organism>
<reference key="1">
    <citation type="journal article" date="2008" name="PLoS ONE">
        <title>An optimized chloroplast DNA extraction protocol for grasses (Poaceae) proves suitable for whole plastid genome sequencing and SNP detection.</title>
        <authorList>
            <person name="Diekmann K."/>
            <person name="Hodkinson T.R."/>
            <person name="Fricke E."/>
            <person name="Barth S."/>
        </authorList>
    </citation>
    <scope>NUCLEOTIDE SEQUENCE [LARGE SCALE GENOMIC DNA]</scope>
    <source>
        <strain>cv. Cashel</strain>
    </source>
</reference>